<feature type="signal peptide" evidence="1">
    <location>
        <begin position="1"/>
        <end position="21"/>
    </location>
</feature>
<feature type="chain" id="PRO_0000020098" description="Outer membrane protein A" evidence="1">
    <location>
        <begin position="22"/>
        <end position="350"/>
    </location>
</feature>
<feature type="transmembrane region" description="Beta stranded" evidence="1">
    <location>
        <begin position="27"/>
        <end position="37"/>
    </location>
</feature>
<feature type="transmembrane region" description="Beta stranded" evidence="1">
    <location>
        <begin position="55"/>
        <end position="66"/>
    </location>
</feature>
<feature type="transmembrane region" description="Beta stranded" evidence="1">
    <location>
        <begin position="70"/>
        <end position="78"/>
    </location>
</feature>
<feature type="transmembrane region" description="Beta stranded" evidence="1">
    <location>
        <begin position="96"/>
        <end position="107"/>
    </location>
</feature>
<feature type="transmembrane region" description="Beta stranded" evidence="1">
    <location>
        <begin position="112"/>
        <end position="120"/>
    </location>
</feature>
<feature type="transmembrane region" description="Beta stranded" evidence="1">
    <location>
        <begin position="146"/>
        <end position="155"/>
    </location>
</feature>
<feature type="transmembrane region" description="Beta stranded" evidence="1">
    <location>
        <begin position="160"/>
        <end position="167"/>
    </location>
</feature>
<feature type="transmembrane region" description="Beta stranded" evidence="1">
    <location>
        <begin position="186"/>
        <end position="194"/>
    </location>
</feature>
<feature type="repeat" description="1">
    <location>
        <begin position="205"/>
        <end position="206"/>
    </location>
</feature>
<feature type="repeat" description="2">
    <location>
        <begin position="207"/>
        <end position="208"/>
    </location>
</feature>
<feature type="repeat" description="3">
    <location>
        <begin position="209"/>
        <end position="210"/>
    </location>
</feature>
<feature type="repeat" description="4">
    <location>
        <begin position="211"/>
        <end position="212"/>
    </location>
</feature>
<feature type="domain" description="OmpA-like" evidence="1">
    <location>
        <begin position="214"/>
        <end position="342"/>
    </location>
</feature>
<feature type="region of interest" description="4 X 2 AA tandem repeats of A-P">
    <location>
        <begin position="205"/>
        <end position="212"/>
    </location>
</feature>
<feature type="site" description="Part of salt bridge gating mechanism" evidence="1">
    <location>
        <position position="73"/>
    </location>
</feature>
<feature type="site" description="Part of salt bridge gating mechanism" evidence="1">
    <location>
        <position position="163"/>
    </location>
</feature>
<feature type="disulfide bond" evidence="1">
    <location>
        <begin position="315"/>
        <end position="327"/>
    </location>
</feature>
<dbReference type="EMBL" id="AL513382">
    <property type="protein sequence ID" value="CAD08196.1"/>
    <property type="molecule type" value="Genomic_DNA"/>
</dbReference>
<dbReference type="EMBL" id="AE014613">
    <property type="protein sequence ID" value="AAO69468.1"/>
    <property type="molecule type" value="Genomic_DNA"/>
</dbReference>
<dbReference type="RefSeq" id="NP_455568.1">
    <property type="nucleotide sequence ID" value="NC_003198.1"/>
</dbReference>
<dbReference type="RefSeq" id="WP_010989142.1">
    <property type="nucleotide sequence ID" value="NZ_WSUR01000013.1"/>
</dbReference>
<dbReference type="SMR" id="Q8Z7S0"/>
<dbReference type="STRING" id="220341.gene:17585074"/>
<dbReference type="KEGG" id="stt:t1850"/>
<dbReference type="KEGG" id="sty:STY1091"/>
<dbReference type="PATRIC" id="fig|220341.7.peg.1099"/>
<dbReference type="eggNOG" id="COG2885">
    <property type="taxonomic scope" value="Bacteria"/>
</dbReference>
<dbReference type="eggNOG" id="COG3637">
    <property type="taxonomic scope" value="Bacteria"/>
</dbReference>
<dbReference type="HOGENOM" id="CLU_031536_0_0_6"/>
<dbReference type="OMA" id="HDTGFYG"/>
<dbReference type="OrthoDB" id="1149075at2"/>
<dbReference type="Proteomes" id="UP000000541">
    <property type="component" value="Chromosome"/>
</dbReference>
<dbReference type="Proteomes" id="UP000002670">
    <property type="component" value="Chromosome"/>
</dbReference>
<dbReference type="GO" id="GO:0009279">
    <property type="term" value="C:cell outer membrane"/>
    <property type="evidence" value="ECO:0007669"/>
    <property type="project" value="UniProtKB-SubCell"/>
</dbReference>
<dbReference type="GO" id="GO:0046930">
    <property type="term" value="C:pore complex"/>
    <property type="evidence" value="ECO:0007669"/>
    <property type="project" value="UniProtKB-KW"/>
</dbReference>
<dbReference type="GO" id="GO:0015288">
    <property type="term" value="F:porin activity"/>
    <property type="evidence" value="ECO:0007669"/>
    <property type="project" value="UniProtKB-UniRule"/>
</dbReference>
<dbReference type="GO" id="GO:0034220">
    <property type="term" value="P:monoatomic ion transmembrane transport"/>
    <property type="evidence" value="ECO:0007669"/>
    <property type="project" value="UniProtKB-UniRule"/>
</dbReference>
<dbReference type="CDD" id="cd07185">
    <property type="entry name" value="OmpA_C-like"/>
    <property type="match status" value="1"/>
</dbReference>
<dbReference type="FunFam" id="2.40.160.20:FF:000003">
    <property type="entry name" value="Outer membrane protein A"/>
    <property type="match status" value="1"/>
</dbReference>
<dbReference type="FunFam" id="3.30.1330.60:FF:000004">
    <property type="entry name" value="Outer membrane protein A"/>
    <property type="match status" value="1"/>
</dbReference>
<dbReference type="Gene3D" id="2.40.160.20">
    <property type="match status" value="1"/>
</dbReference>
<dbReference type="Gene3D" id="3.30.1330.60">
    <property type="entry name" value="OmpA-like domain"/>
    <property type="match status" value="1"/>
</dbReference>
<dbReference type="HAMAP" id="MF_00842">
    <property type="entry name" value="OmpA"/>
    <property type="match status" value="1"/>
</dbReference>
<dbReference type="InterPro" id="IPR050330">
    <property type="entry name" value="Bact_OuterMem_StrucFunc"/>
</dbReference>
<dbReference type="InterPro" id="IPR011250">
    <property type="entry name" value="OMP/PagP_b-brl"/>
</dbReference>
<dbReference type="InterPro" id="IPR006664">
    <property type="entry name" value="OMP_bac"/>
</dbReference>
<dbReference type="InterPro" id="IPR002368">
    <property type="entry name" value="OmpA"/>
</dbReference>
<dbReference type="InterPro" id="IPR006665">
    <property type="entry name" value="OmpA-like"/>
</dbReference>
<dbReference type="InterPro" id="IPR006690">
    <property type="entry name" value="OMPA-like_CS"/>
</dbReference>
<dbReference type="InterPro" id="IPR036737">
    <property type="entry name" value="OmpA-like_sf"/>
</dbReference>
<dbReference type="InterPro" id="IPR000498">
    <property type="entry name" value="OmpA-like_TM_dom"/>
</dbReference>
<dbReference type="NCBIfam" id="NF008071">
    <property type="entry name" value="PRK10808.1"/>
    <property type="match status" value="1"/>
</dbReference>
<dbReference type="PANTHER" id="PTHR30329:SF21">
    <property type="entry name" value="LIPOPROTEIN YIAD-RELATED"/>
    <property type="match status" value="1"/>
</dbReference>
<dbReference type="PANTHER" id="PTHR30329">
    <property type="entry name" value="STATOR ELEMENT OF FLAGELLAR MOTOR COMPLEX"/>
    <property type="match status" value="1"/>
</dbReference>
<dbReference type="Pfam" id="PF00691">
    <property type="entry name" value="OmpA"/>
    <property type="match status" value="1"/>
</dbReference>
<dbReference type="Pfam" id="PF01389">
    <property type="entry name" value="OmpA_membrane"/>
    <property type="match status" value="1"/>
</dbReference>
<dbReference type="PRINTS" id="PR01021">
    <property type="entry name" value="OMPADOMAIN"/>
</dbReference>
<dbReference type="PRINTS" id="PR01022">
    <property type="entry name" value="OUTRMMBRANEA"/>
</dbReference>
<dbReference type="SUPFAM" id="SSF56925">
    <property type="entry name" value="OMPA-like"/>
    <property type="match status" value="1"/>
</dbReference>
<dbReference type="SUPFAM" id="SSF103088">
    <property type="entry name" value="OmpA-like"/>
    <property type="match status" value="1"/>
</dbReference>
<dbReference type="PROSITE" id="PS01068">
    <property type="entry name" value="OMPA_1"/>
    <property type="match status" value="1"/>
</dbReference>
<dbReference type="PROSITE" id="PS51123">
    <property type="entry name" value="OMPA_2"/>
    <property type="match status" value="1"/>
</dbReference>
<protein>
    <recommendedName>
        <fullName evidence="1">Outer membrane protein A</fullName>
    </recommendedName>
    <alternativeName>
        <fullName evidence="1">Outer membrane porin A</fullName>
    </alternativeName>
</protein>
<organism>
    <name type="scientific">Salmonella typhi</name>
    <dbReference type="NCBI Taxonomy" id="90370"/>
    <lineage>
        <taxon>Bacteria</taxon>
        <taxon>Pseudomonadati</taxon>
        <taxon>Pseudomonadota</taxon>
        <taxon>Gammaproteobacteria</taxon>
        <taxon>Enterobacterales</taxon>
        <taxon>Enterobacteriaceae</taxon>
        <taxon>Salmonella</taxon>
    </lineage>
</organism>
<sequence length="350" mass="37477">MKKTAIAIAVALAGFATVAQAAPKDNTWYAGAKLGWSQYHDTGFIHNDGPTHENQLGAGAFGGYQVNPYVGFEMGYDWLGRMPYKGDNTNGAYKAQGVQLTAKLGYPITDDLDVYTRLGGMVWRADTKSNVPGGASTKDHDTGVSPVFAGGIEYAITPEIATRLEYQWTNNIGDANTIGTRPDNGLLSVGVSYRFGQQEAAPVVAPAPAPAPEVQTKHFTLKSDVLFNFNKSTLKPEGQQALDQLYSQLSNLDPKDGSVVVLGFTDRIGSDAYNQGLSEKRAQSVVDYLISKGIPSDKISARGMGESNPVTGNTCDNVKPRAALIDCLAPDRRVEIEVKGVKDVVTQPQA</sequence>
<comment type="function">
    <text evidence="1">With TolR probably plays a role in maintaining the position of the peptidoglycan cell wall in the periplasm. Acts as a porin with low permeability that allows slow penetration of small solutes; an internal gate slows down solute passage.</text>
</comment>
<comment type="function">
    <text evidence="1">Required for conjugation with F-type plasmids; probably serves as the mating receptor on recipient cells.</text>
</comment>
<comment type="subunit">
    <text evidence="1">Monomer and homodimer.</text>
</comment>
<comment type="subcellular location">
    <subcellularLocation>
        <location evidence="1">Cell outer membrane</location>
        <topology evidence="1">Multi-pass membrane protein</topology>
    </subcellularLocation>
</comment>
<comment type="domain">
    <text evidence="1">The extracellular loops are most variable in sequence, and in some bacteria confer sensitivity to phage and/or colicins.</text>
</comment>
<comment type="similarity">
    <text evidence="1">Belongs to the outer membrane OOP (TC 1.B.6) superfamily. OmpA family.</text>
</comment>
<proteinExistence type="inferred from homology"/>
<gene>
    <name evidence="1" type="primary">ompA</name>
    <name type="ordered locus">STY1091</name>
    <name type="ordered locus">t1850</name>
</gene>
<evidence type="ECO:0000255" key="1">
    <source>
        <dbReference type="HAMAP-Rule" id="MF_00842"/>
    </source>
</evidence>
<reference key="1">
    <citation type="journal article" date="2001" name="Nature">
        <title>Complete genome sequence of a multiple drug resistant Salmonella enterica serovar Typhi CT18.</title>
        <authorList>
            <person name="Parkhill J."/>
            <person name="Dougan G."/>
            <person name="James K.D."/>
            <person name="Thomson N.R."/>
            <person name="Pickard D."/>
            <person name="Wain J."/>
            <person name="Churcher C.M."/>
            <person name="Mungall K.L."/>
            <person name="Bentley S.D."/>
            <person name="Holden M.T.G."/>
            <person name="Sebaihia M."/>
            <person name="Baker S."/>
            <person name="Basham D."/>
            <person name="Brooks K."/>
            <person name="Chillingworth T."/>
            <person name="Connerton P."/>
            <person name="Cronin A."/>
            <person name="Davis P."/>
            <person name="Davies R.M."/>
            <person name="Dowd L."/>
            <person name="White N."/>
            <person name="Farrar J."/>
            <person name="Feltwell T."/>
            <person name="Hamlin N."/>
            <person name="Haque A."/>
            <person name="Hien T.T."/>
            <person name="Holroyd S."/>
            <person name="Jagels K."/>
            <person name="Krogh A."/>
            <person name="Larsen T.S."/>
            <person name="Leather S."/>
            <person name="Moule S."/>
            <person name="O'Gaora P."/>
            <person name="Parry C."/>
            <person name="Quail M.A."/>
            <person name="Rutherford K.M."/>
            <person name="Simmonds M."/>
            <person name="Skelton J."/>
            <person name="Stevens K."/>
            <person name="Whitehead S."/>
            <person name="Barrell B.G."/>
        </authorList>
    </citation>
    <scope>NUCLEOTIDE SEQUENCE [LARGE SCALE GENOMIC DNA]</scope>
    <source>
        <strain>CT18</strain>
    </source>
</reference>
<reference key="2">
    <citation type="journal article" date="2003" name="J. Bacteriol.">
        <title>Comparative genomics of Salmonella enterica serovar Typhi strains Ty2 and CT18.</title>
        <authorList>
            <person name="Deng W."/>
            <person name="Liou S.-R."/>
            <person name="Plunkett G. III"/>
            <person name="Mayhew G.F."/>
            <person name="Rose D.J."/>
            <person name="Burland V."/>
            <person name="Kodoyianni V."/>
            <person name="Schwartz D.C."/>
            <person name="Blattner F.R."/>
        </authorList>
    </citation>
    <scope>NUCLEOTIDE SEQUENCE [LARGE SCALE GENOMIC DNA]</scope>
    <source>
        <strain>ATCC 700931 / Ty2</strain>
    </source>
</reference>
<keyword id="KW-0998">Cell outer membrane</keyword>
<keyword id="KW-0184">Conjugation</keyword>
<keyword id="KW-1015">Disulfide bond</keyword>
<keyword id="KW-0406">Ion transport</keyword>
<keyword id="KW-0472">Membrane</keyword>
<keyword id="KW-0626">Porin</keyword>
<keyword id="KW-0677">Repeat</keyword>
<keyword id="KW-0732">Signal</keyword>
<keyword id="KW-0812">Transmembrane</keyword>
<keyword id="KW-1134">Transmembrane beta strand</keyword>
<keyword id="KW-0813">Transport</keyword>
<name>OMPA_SALTI</name>
<accession>Q8Z7S0</accession>
<accession>Q7C962</accession>